<comment type="function">
    <text evidence="1">Allows the formation of correctly charged Asn-tRNA(Asn) or Gln-tRNA(Gln) through the transamidation of misacylated Asp-tRNA(Asn) or Glu-tRNA(Gln) in organisms which lack either or both of asparaginyl-tRNA or glutaminyl-tRNA synthetases. The reaction takes place in the presence of glutamine and ATP through an activated phospho-Asp-tRNA(Asn) or phospho-Glu-tRNA(Gln).</text>
</comment>
<comment type="catalytic activity">
    <reaction evidence="1">
        <text>L-glutamyl-tRNA(Gln) + L-glutamine + ATP + H2O = L-glutaminyl-tRNA(Gln) + L-glutamate + ADP + phosphate + H(+)</text>
        <dbReference type="Rhea" id="RHEA:17521"/>
        <dbReference type="Rhea" id="RHEA-COMP:9681"/>
        <dbReference type="Rhea" id="RHEA-COMP:9684"/>
        <dbReference type="ChEBI" id="CHEBI:15377"/>
        <dbReference type="ChEBI" id="CHEBI:15378"/>
        <dbReference type="ChEBI" id="CHEBI:29985"/>
        <dbReference type="ChEBI" id="CHEBI:30616"/>
        <dbReference type="ChEBI" id="CHEBI:43474"/>
        <dbReference type="ChEBI" id="CHEBI:58359"/>
        <dbReference type="ChEBI" id="CHEBI:78520"/>
        <dbReference type="ChEBI" id="CHEBI:78521"/>
        <dbReference type="ChEBI" id="CHEBI:456216"/>
    </reaction>
</comment>
<comment type="catalytic activity">
    <reaction evidence="1">
        <text>L-aspartyl-tRNA(Asn) + L-glutamine + ATP + H2O = L-asparaginyl-tRNA(Asn) + L-glutamate + ADP + phosphate + 2 H(+)</text>
        <dbReference type="Rhea" id="RHEA:14513"/>
        <dbReference type="Rhea" id="RHEA-COMP:9674"/>
        <dbReference type="Rhea" id="RHEA-COMP:9677"/>
        <dbReference type="ChEBI" id="CHEBI:15377"/>
        <dbReference type="ChEBI" id="CHEBI:15378"/>
        <dbReference type="ChEBI" id="CHEBI:29985"/>
        <dbReference type="ChEBI" id="CHEBI:30616"/>
        <dbReference type="ChEBI" id="CHEBI:43474"/>
        <dbReference type="ChEBI" id="CHEBI:58359"/>
        <dbReference type="ChEBI" id="CHEBI:78515"/>
        <dbReference type="ChEBI" id="CHEBI:78516"/>
        <dbReference type="ChEBI" id="CHEBI:456216"/>
    </reaction>
</comment>
<comment type="subunit">
    <text evidence="1">Heterotrimer of A, B and C subunits.</text>
</comment>
<comment type="similarity">
    <text evidence="1">Belongs to the GatB/GatE family. GatB subfamily.</text>
</comment>
<sequence length="475" mass="53630">MHFETVIGLEVHVELKTDSKMFSPSPAHFGAEPNSNTNVIDLAYPGVLPVVNKRAVDWAMRAAMALNMEIATESKFDRKNYFYPDNPKAYQISQFDQPIGENGYIDIEVDGETKRIGITRLHMEEDAGKSTHKGEYSLVDLNRQGTPLIEIVSEPDIRSPKEAYAYLEKLRSIIQYTGVSDVKMEEGSLRCDANISLRPYGQEKFGTKAELKNLNSFNYVRKGLEYEEKRQEEELLSGGEIGQETRRFDESTGKTILMRVKEGSDDYRYFPEPDIVPLYIDDAWKERVRQTIPELPDERKAKYVNELGLPAYDAHVLTLTKEMSDFFESTIEHGADVKLTSNWLMGGVNEYLNKNQVELLDTKLTPENLAGMIKLIEDGTMSSKIAKKVFPELAAKGGNAKQIMEDNGLVQISDEATLLKFVNEALDNNEQSVEDYKNGKGKAMGFLVGQIMKASKGQANPQLVNQLLKQELDKR</sequence>
<name>GATB_STAAR</name>
<gene>
    <name evidence="1" type="primary">gatB</name>
    <name type="ordered locus">SAR1991</name>
</gene>
<evidence type="ECO:0000255" key="1">
    <source>
        <dbReference type="HAMAP-Rule" id="MF_00121"/>
    </source>
</evidence>
<proteinExistence type="inferred from homology"/>
<feature type="chain" id="PRO_0000148836" description="Aspartyl/glutamyl-tRNA(Asn/Gln) amidotransferase subunit B">
    <location>
        <begin position="1"/>
        <end position="475"/>
    </location>
</feature>
<keyword id="KW-0067">ATP-binding</keyword>
<keyword id="KW-0436">Ligase</keyword>
<keyword id="KW-0547">Nucleotide-binding</keyword>
<keyword id="KW-0648">Protein biosynthesis</keyword>
<protein>
    <recommendedName>
        <fullName evidence="1">Aspartyl/glutamyl-tRNA(Asn/Gln) amidotransferase subunit B</fullName>
        <shortName evidence="1">Asp/Glu-ADT subunit B</shortName>
        <ecNumber evidence="1">6.3.5.-</ecNumber>
    </recommendedName>
</protein>
<organism>
    <name type="scientific">Staphylococcus aureus (strain MRSA252)</name>
    <dbReference type="NCBI Taxonomy" id="282458"/>
    <lineage>
        <taxon>Bacteria</taxon>
        <taxon>Bacillati</taxon>
        <taxon>Bacillota</taxon>
        <taxon>Bacilli</taxon>
        <taxon>Bacillales</taxon>
        <taxon>Staphylococcaceae</taxon>
        <taxon>Staphylococcus</taxon>
    </lineage>
</organism>
<dbReference type="EC" id="6.3.5.-" evidence="1"/>
<dbReference type="EMBL" id="BX571856">
    <property type="protein sequence ID" value="CAG40976.1"/>
    <property type="molecule type" value="Genomic_DNA"/>
</dbReference>
<dbReference type="RefSeq" id="WP_000545373.1">
    <property type="nucleotide sequence ID" value="NC_002952.2"/>
</dbReference>
<dbReference type="SMR" id="Q6GFF8"/>
<dbReference type="KEGG" id="sar:SAR1991"/>
<dbReference type="HOGENOM" id="CLU_019240_0_0_9"/>
<dbReference type="Proteomes" id="UP000000596">
    <property type="component" value="Chromosome"/>
</dbReference>
<dbReference type="GO" id="GO:0050566">
    <property type="term" value="F:asparaginyl-tRNA synthase (glutamine-hydrolyzing) activity"/>
    <property type="evidence" value="ECO:0007669"/>
    <property type="project" value="RHEA"/>
</dbReference>
<dbReference type="GO" id="GO:0005524">
    <property type="term" value="F:ATP binding"/>
    <property type="evidence" value="ECO:0007669"/>
    <property type="project" value="UniProtKB-KW"/>
</dbReference>
<dbReference type="GO" id="GO:0050567">
    <property type="term" value="F:glutaminyl-tRNA synthase (glutamine-hydrolyzing) activity"/>
    <property type="evidence" value="ECO:0007669"/>
    <property type="project" value="UniProtKB-UniRule"/>
</dbReference>
<dbReference type="GO" id="GO:0070681">
    <property type="term" value="P:glutaminyl-tRNAGln biosynthesis via transamidation"/>
    <property type="evidence" value="ECO:0007669"/>
    <property type="project" value="TreeGrafter"/>
</dbReference>
<dbReference type="GO" id="GO:0006412">
    <property type="term" value="P:translation"/>
    <property type="evidence" value="ECO:0007669"/>
    <property type="project" value="UniProtKB-UniRule"/>
</dbReference>
<dbReference type="FunFam" id="1.10.10.410:FF:000001">
    <property type="entry name" value="Aspartyl/glutamyl-tRNA(Asn/Gln) amidotransferase subunit B"/>
    <property type="match status" value="1"/>
</dbReference>
<dbReference type="FunFam" id="1.10.150.380:FF:000001">
    <property type="entry name" value="Aspartyl/glutamyl-tRNA(Asn/Gln) amidotransferase subunit B"/>
    <property type="match status" value="1"/>
</dbReference>
<dbReference type="Gene3D" id="1.10.10.410">
    <property type="match status" value="1"/>
</dbReference>
<dbReference type="Gene3D" id="1.10.150.380">
    <property type="entry name" value="GatB domain, N-terminal subdomain"/>
    <property type="match status" value="1"/>
</dbReference>
<dbReference type="HAMAP" id="MF_00121">
    <property type="entry name" value="GatB"/>
    <property type="match status" value="1"/>
</dbReference>
<dbReference type="InterPro" id="IPR017959">
    <property type="entry name" value="Asn/Gln-tRNA_amidoTrfase_suB/E"/>
</dbReference>
<dbReference type="InterPro" id="IPR006075">
    <property type="entry name" value="Asn/Gln-tRNA_Trfase_suB/E_cat"/>
</dbReference>
<dbReference type="InterPro" id="IPR018027">
    <property type="entry name" value="Asn/Gln_amidotransferase"/>
</dbReference>
<dbReference type="InterPro" id="IPR003789">
    <property type="entry name" value="Asn/Gln_tRNA_amidoTrase-B-like"/>
</dbReference>
<dbReference type="InterPro" id="IPR004413">
    <property type="entry name" value="GatB"/>
</dbReference>
<dbReference type="InterPro" id="IPR042114">
    <property type="entry name" value="GatB_C_1"/>
</dbReference>
<dbReference type="InterPro" id="IPR023168">
    <property type="entry name" value="GatB_Yqey_C_2"/>
</dbReference>
<dbReference type="InterPro" id="IPR017958">
    <property type="entry name" value="Gln-tRNA_amidoTrfase_suB_CS"/>
</dbReference>
<dbReference type="InterPro" id="IPR014746">
    <property type="entry name" value="Gln_synth/guanido_kin_cat_dom"/>
</dbReference>
<dbReference type="NCBIfam" id="TIGR00133">
    <property type="entry name" value="gatB"/>
    <property type="match status" value="1"/>
</dbReference>
<dbReference type="NCBIfam" id="NF004011">
    <property type="entry name" value="PRK05477.1-1"/>
    <property type="match status" value="1"/>
</dbReference>
<dbReference type="NCBIfam" id="NF004012">
    <property type="entry name" value="PRK05477.1-2"/>
    <property type="match status" value="1"/>
</dbReference>
<dbReference type="NCBIfam" id="NF004014">
    <property type="entry name" value="PRK05477.1-4"/>
    <property type="match status" value="1"/>
</dbReference>
<dbReference type="PANTHER" id="PTHR11659">
    <property type="entry name" value="GLUTAMYL-TRNA GLN AMIDOTRANSFERASE SUBUNIT B MITOCHONDRIAL AND PROKARYOTIC PET112-RELATED"/>
    <property type="match status" value="1"/>
</dbReference>
<dbReference type="PANTHER" id="PTHR11659:SF0">
    <property type="entry name" value="GLUTAMYL-TRNA(GLN) AMIDOTRANSFERASE SUBUNIT B, MITOCHONDRIAL"/>
    <property type="match status" value="1"/>
</dbReference>
<dbReference type="Pfam" id="PF02934">
    <property type="entry name" value="GatB_N"/>
    <property type="match status" value="1"/>
</dbReference>
<dbReference type="Pfam" id="PF02637">
    <property type="entry name" value="GatB_Yqey"/>
    <property type="match status" value="1"/>
</dbReference>
<dbReference type="SMART" id="SM00845">
    <property type="entry name" value="GatB_Yqey"/>
    <property type="match status" value="1"/>
</dbReference>
<dbReference type="SUPFAM" id="SSF89095">
    <property type="entry name" value="GatB/YqeY motif"/>
    <property type="match status" value="1"/>
</dbReference>
<dbReference type="SUPFAM" id="SSF55931">
    <property type="entry name" value="Glutamine synthetase/guanido kinase"/>
    <property type="match status" value="1"/>
</dbReference>
<dbReference type="PROSITE" id="PS01234">
    <property type="entry name" value="GATB"/>
    <property type="match status" value="1"/>
</dbReference>
<accession>Q6GFF8</accession>
<reference key="1">
    <citation type="journal article" date="2004" name="Proc. Natl. Acad. Sci. U.S.A.">
        <title>Complete genomes of two clinical Staphylococcus aureus strains: evidence for the rapid evolution of virulence and drug resistance.</title>
        <authorList>
            <person name="Holden M.T.G."/>
            <person name="Feil E.J."/>
            <person name="Lindsay J.A."/>
            <person name="Peacock S.J."/>
            <person name="Day N.P.J."/>
            <person name="Enright M.C."/>
            <person name="Foster T.J."/>
            <person name="Moore C.E."/>
            <person name="Hurst L."/>
            <person name="Atkin R."/>
            <person name="Barron A."/>
            <person name="Bason N."/>
            <person name="Bentley S.D."/>
            <person name="Chillingworth C."/>
            <person name="Chillingworth T."/>
            <person name="Churcher C."/>
            <person name="Clark L."/>
            <person name="Corton C."/>
            <person name="Cronin A."/>
            <person name="Doggett J."/>
            <person name="Dowd L."/>
            <person name="Feltwell T."/>
            <person name="Hance Z."/>
            <person name="Harris B."/>
            <person name="Hauser H."/>
            <person name="Holroyd S."/>
            <person name="Jagels K."/>
            <person name="James K.D."/>
            <person name="Lennard N."/>
            <person name="Line A."/>
            <person name="Mayes R."/>
            <person name="Moule S."/>
            <person name="Mungall K."/>
            <person name="Ormond D."/>
            <person name="Quail M.A."/>
            <person name="Rabbinowitsch E."/>
            <person name="Rutherford K.M."/>
            <person name="Sanders M."/>
            <person name="Sharp S."/>
            <person name="Simmonds M."/>
            <person name="Stevens K."/>
            <person name="Whitehead S."/>
            <person name="Barrell B.G."/>
            <person name="Spratt B.G."/>
            <person name="Parkhill J."/>
        </authorList>
    </citation>
    <scope>NUCLEOTIDE SEQUENCE [LARGE SCALE GENOMIC DNA]</scope>
    <source>
        <strain>MRSA252</strain>
    </source>
</reference>